<dbReference type="EMBL" id="AY158009">
    <property type="protein sequence ID" value="AAO17792.1"/>
    <property type="molecule type" value="mRNA"/>
</dbReference>
<dbReference type="SMR" id="Q7ZZV3"/>
<dbReference type="GO" id="GO:0005615">
    <property type="term" value="C:extracellular space"/>
    <property type="evidence" value="ECO:0007669"/>
    <property type="project" value="TreeGrafter"/>
</dbReference>
<dbReference type="GO" id="GO:0005179">
    <property type="term" value="F:hormone activity"/>
    <property type="evidence" value="ECO:0007669"/>
    <property type="project" value="UniProtKB-KW"/>
</dbReference>
<dbReference type="GO" id="GO:0008284">
    <property type="term" value="P:positive regulation of cell population proliferation"/>
    <property type="evidence" value="ECO:0007669"/>
    <property type="project" value="TreeGrafter"/>
</dbReference>
<dbReference type="GO" id="GO:0046427">
    <property type="term" value="P:positive regulation of receptor signaling pathway via JAK-STAT"/>
    <property type="evidence" value="ECO:0007669"/>
    <property type="project" value="TreeGrafter"/>
</dbReference>
<dbReference type="GO" id="GO:0031667">
    <property type="term" value="P:response to nutrient levels"/>
    <property type="evidence" value="ECO:0007669"/>
    <property type="project" value="TreeGrafter"/>
</dbReference>
<dbReference type="Gene3D" id="1.20.1250.10">
    <property type="match status" value="1"/>
</dbReference>
<dbReference type="InterPro" id="IPR009079">
    <property type="entry name" value="4_helix_cytokine-like_core"/>
</dbReference>
<dbReference type="InterPro" id="IPR001400">
    <property type="entry name" value="Somatotropin/Prolactin"/>
</dbReference>
<dbReference type="InterPro" id="IPR018116">
    <property type="entry name" value="Somatotropin_CS"/>
</dbReference>
<dbReference type="PANTHER" id="PTHR11417:SF5">
    <property type="entry name" value="PROLACTIN"/>
    <property type="match status" value="1"/>
</dbReference>
<dbReference type="PANTHER" id="PTHR11417">
    <property type="entry name" value="SOMATOTROPIN,PROLACTIN"/>
    <property type="match status" value="1"/>
</dbReference>
<dbReference type="Pfam" id="PF00103">
    <property type="entry name" value="Hormone_1"/>
    <property type="match status" value="1"/>
</dbReference>
<dbReference type="PRINTS" id="PR00836">
    <property type="entry name" value="SOMATOTROPIN"/>
</dbReference>
<dbReference type="SUPFAM" id="SSF47266">
    <property type="entry name" value="4-helical cytokines"/>
    <property type="match status" value="1"/>
</dbReference>
<dbReference type="PROSITE" id="PS00266">
    <property type="entry name" value="SOMATOTROPIN_1"/>
    <property type="match status" value="1"/>
</dbReference>
<dbReference type="PROSITE" id="PS00338">
    <property type="entry name" value="SOMATOTROPIN_2"/>
    <property type="match status" value="1"/>
</dbReference>
<evidence type="ECO:0000250" key="1"/>
<evidence type="ECO:0000305" key="2"/>
<proteinExistence type="evidence at transcript level"/>
<keyword id="KW-1015">Disulfide bond</keyword>
<keyword id="KW-0372">Hormone</keyword>
<keyword id="KW-0964">Secreted</keyword>
<keyword id="KW-0732">Signal</keyword>
<reference key="1">
    <citation type="journal article" date="2003" name="Mar. Ecol. Prog. Ser.">
        <title>Salinity preference of the silvering Japanese eel Anguilla japonica: evidences from the pituitary prolactin mRNA levels and otolith strontium/calcium ratios.</title>
        <authorList>
            <person name="Han Y.-S."/>
            <person name="Yu J.Y.-L."/>
            <person name="Liao I.-C."/>
            <person name="Tzeng W.-N."/>
        </authorList>
    </citation>
    <scope>NUCLEOTIDE SEQUENCE [MRNA]</scope>
</reference>
<accession>Q7ZZV3</accession>
<gene>
    <name type="primary">prl</name>
</gene>
<organism>
    <name type="scientific">Anguilla japonica</name>
    <name type="common">Japanese eel</name>
    <dbReference type="NCBI Taxonomy" id="7937"/>
    <lineage>
        <taxon>Eukaryota</taxon>
        <taxon>Metazoa</taxon>
        <taxon>Chordata</taxon>
        <taxon>Craniata</taxon>
        <taxon>Vertebrata</taxon>
        <taxon>Euteleostomi</taxon>
        <taxon>Actinopterygii</taxon>
        <taxon>Neopterygii</taxon>
        <taxon>Teleostei</taxon>
        <taxon>Anguilliformes</taxon>
        <taxon>Anguillidae</taxon>
        <taxon>Anguilla</taxon>
    </lineage>
</organism>
<name>PRL_ANGJA</name>
<feature type="signal peptide" evidence="1">
    <location>
        <begin position="1"/>
        <end position="24"/>
    </location>
</feature>
<feature type="chain" id="PRO_0000032931" description="Prolactin">
    <location>
        <begin position="25"/>
        <end position="209"/>
    </location>
</feature>
<feature type="disulfide bond" evidence="1">
    <location>
        <begin position="70"/>
        <end position="184"/>
    </location>
</feature>
<feature type="disulfide bond" evidence="1">
    <location>
        <begin position="201"/>
        <end position="209"/>
    </location>
</feature>
<protein>
    <recommendedName>
        <fullName>Prolactin</fullName>
        <shortName>PRL</shortName>
    </recommendedName>
</protein>
<comment type="subcellular location">
    <subcellularLocation>
        <location>Secreted</location>
    </subcellularLocation>
</comment>
<comment type="similarity">
    <text evidence="2">Belongs to the somatotropin/prolactin family.</text>
</comment>
<sequence length="209" mass="23155">MAQRFKGSNLFLTALLCLASQGHAVGLGDMLERASQLSDKLHSLSTSLTNDLDTHFPPMGKILMPRPSMCHTASLQTPHDKDQALRVPESELLSLARALLLSWNDPLLLLTSEAPTLSHPQNGVIYSKTRELQDQSNSLSSGLDRLIHKIGSSSKSLSPLPFQGGDLGSDKNSRLINFYFLLSCFRRDSHKIDNFLKLLRCRAAKQDRC</sequence>